<accession>Q9XZ51</accession>
<accession>A0A7G3AJ28</accession>
<dbReference type="EMBL" id="AF132518">
    <property type="protein sequence ID" value="AAD32198.1"/>
    <property type="molecule type" value="mRNA"/>
</dbReference>
<dbReference type="EMBL" id="GITU01005339">
    <property type="protein sequence ID" value="MBC1174042.1"/>
    <property type="molecule type" value="Transcribed_RNA"/>
</dbReference>
<dbReference type="SMR" id="Q9XZ51"/>
<dbReference type="EnsemblMetazoa" id="LLONM1_011392.R19017">
    <property type="protein sequence ID" value="LLONM1_011392.P19017"/>
    <property type="gene ID" value="LLONM1_011392"/>
</dbReference>
<dbReference type="VEuPathDB" id="VectorBase:LLOJ001469"/>
<dbReference type="VEuPathDB" id="VectorBase:LLONM1_011392"/>
<dbReference type="OrthoDB" id="6583604at2759"/>
<dbReference type="Proteomes" id="UP000092461">
    <property type="component" value="Unplaced"/>
</dbReference>
<dbReference type="GO" id="GO:0005576">
    <property type="term" value="C:extracellular region"/>
    <property type="evidence" value="ECO:0007669"/>
    <property type="project" value="UniProtKB-SubCell"/>
</dbReference>
<dbReference type="Gene3D" id="2.120.10.30">
    <property type="entry name" value="TolB, C-terminal domain"/>
    <property type="match status" value="1"/>
</dbReference>
<dbReference type="InterPro" id="IPR011042">
    <property type="entry name" value="6-blade_b-propeller_TolB-like"/>
</dbReference>
<dbReference type="InterPro" id="IPR017996">
    <property type="entry name" value="Royal_jelly/protein_yellow"/>
</dbReference>
<dbReference type="PANTHER" id="PTHR10009:SF7">
    <property type="entry name" value="GH10609P-RELATED"/>
    <property type="match status" value="1"/>
</dbReference>
<dbReference type="PANTHER" id="PTHR10009">
    <property type="entry name" value="PROTEIN YELLOW-RELATED"/>
    <property type="match status" value="1"/>
</dbReference>
<dbReference type="Pfam" id="PF03022">
    <property type="entry name" value="MRJP"/>
    <property type="match status" value="1"/>
</dbReference>
<dbReference type="SUPFAM" id="SSF63829">
    <property type="entry name" value="Calcium-dependent phosphotriesterase"/>
    <property type="match status" value="1"/>
</dbReference>
<name>YP17_LUTLO</name>
<sequence length="412" mass="47302">MRFFFVFLAIVLFQGIHGAYVEIGYSLRNITFDGLDTDDYNPKFNIPTGLAVDPEGYRLFIAIPRRKPKVPYTVAELNMVMNPGFPVERAPSFEKFKKFNGEGKKDLVNVYQPVIDDCRRLWVLDIGKVEYTGGDADQYPKGKPTLIAYDLKKDHTPEIHRFEIPDDLYSSQVEFGGFAVDVVNTKGDCTESFVYLTNFKDNSLIVYDETQKKAWKFTDKTFEADKESTFSYSGEEQMKYKVGLFGIALGDRDEMGHRPACYIAGSSTKVYSVNTKELKTENGQLNPQLHGDRGKYTDAIALAYDPEHKVLYFAESDSRQVSCWNVNMELKPDNTDVIFSSARFTFGTDILVDSKGMLWIMANGHPPVEDQEKIWKMRFVNRKIRIMKVDTERVFKYSRCNPNYKPPKEIEV</sequence>
<reference evidence="10" key="1">
    <citation type="journal article" date="1999" name="Proc. Natl. Acad. Sci. U.S.A.">
        <title>Toward an understanding of the biochemical and pharmacological complexity of the saliva of a hematophagous sand fly Lutzomyia longipalpis.</title>
        <authorList>
            <person name="Charlab R."/>
            <person name="Valenzuela J.G."/>
            <person name="Rowton E.D."/>
            <person name="Ribeiro J.M."/>
        </authorList>
    </citation>
    <scope>NUCLEOTIDE SEQUENCE [LARGE SCALE MRNA]</scope>
    <scope>TISSUE SPECIFICITY</scope>
    <source>
        <strain evidence="10">Jacobina</strain>
        <tissue evidence="10">Salivary gland</tissue>
    </source>
</reference>
<reference evidence="11" key="2">
    <citation type="journal article" date="2020" name="BMC Genomics">
        <title>Leishmania infection induces a limited differential gene expression in the sand fly midgut.</title>
        <authorList>
            <person name="Coutinho-Abreu I.V."/>
            <person name="Serafim T.D."/>
            <person name="Meneses C."/>
            <person name="Kamhawi S."/>
            <person name="Oliveira F."/>
            <person name="Valenzuela J.G."/>
        </authorList>
    </citation>
    <scope>NUCLEOTIDE SEQUENCE [LARGE SCALE MRNA]</scope>
    <source>
        <strain evidence="11">Jacobina</strain>
        <tissue evidence="11">Midgut</tissue>
    </source>
</reference>
<reference evidence="9" key="3">
    <citation type="journal article" date="2011" name="J. Biol. Chem.">
        <title>Structure and function of a 'yellow' protein from saliva of the sand fly Lutzomyia longipalpis that confers protective immunity against Leishmania major infection.</title>
        <authorList>
            <person name="Xu X."/>
            <person name="Oliveira F."/>
            <person name="Chang B.W."/>
            <person name="Collin N."/>
            <person name="Gomes R."/>
            <person name="Teixeira C."/>
            <person name="Reynoso D."/>
            <person name="My Pham V."/>
            <person name="Elnaiem D.E."/>
            <person name="Kamhawi S."/>
            <person name="Ribeiro J.M."/>
            <person name="Valenzuela J.G."/>
            <person name="Andersen J.F."/>
        </authorList>
    </citation>
    <scope>FUNCTION</scope>
</reference>
<reference key="4">
    <citation type="journal article" date="2021" name="Nat. Commun.">
        <title>A sand fly salivary protein acts as a neutrophil chemoattractant.</title>
        <authorList>
            <person name="Guimaraes-Costa A.B."/>
            <person name="Shannon J.P."/>
            <person name="Waclawiak I."/>
            <person name="Oliveira J."/>
            <person name="Meneses C."/>
            <person name="de Castro W."/>
            <person name="Wen X."/>
            <person name="Brzostowski J."/>
            <person name="Serafim T.D."/>
            <person name="Andersen J.F."/>
            <person name="Hickman H.D."/>
            <person name="Kamhawi S."/>
            <person name="Valenzuela J.G."/>
            <person name="Oliveira F."/>
        </authorList>
    </citation>
    <scope>FUNCTION</scope>
</reference>
<proteinExistence type="evidence at transcript level"/>
<feature type="signal peptide" evidence="1">
    <location>
        <begin position="1"/>
        <end position="18"/>
    </location>
</feature>
<feature type="chain" id="PRO_5004338760" description="Yellow-related salivary protein LJM17" evidence="1">
    <location>
        <begin position="19"/>
        <end position="412"/>
    </location>
</feature>
<feature type="glycosylation site" description="N-linked (GlcNAc...) asparagine" evidence="2">
    <location>
        <position position="29"/>
    </location>
</feature>
<feature type="sequence conflict" description="In Ref. 2; MBC1174042." evidence="9" ref="2">
    <original>C</original>
    <variation>Y</variation>
    <location>
        <position position="261"/>
    </location>
</feature>
<comment type="function">
    <text evidence="4 5 9">Probably modulates blood feeding of sand flies on vertebrate species by binding and sequestering different mediators involved in the host response (Probable). Binds biogenic amines (PubMed:21795673). Binds serotonin with high affinity (PubMed:21795673). Binds noradrenaline but not adrenaline (PubMed:21795673). Binds dopamine and octopamine (PubMed:21795673). Binds histamine (PubMed:21795673). Inhibits host smooth muscle contraction induced by histamine in bioassay with guinea pig ileum (PubMed:21795673). Immunogenic; elicits antibody production in the host (PubMed:21795673). Functions as a chemoattractant for host neutrophils; likely acts through a G-protein-coupled receptor and effect is dependent on calcium influx (PubMed:34050141).</text>
</comment>
<comment type="subcellular location">
    <subcellularLocation>
        <location evidence="9">Secreted</location>
    </subcellularLocation>
</comment>
<comment type="tissue specificity">
    <text evidence="3">Salivary gland.</text>
</comment>
<comment type="similarity">
    <text evidence="9">Belongs to the major royal jelly protein family.</text>
</comment>
<evidence type="ECO:0000255" key="1"/>
<evidence type="ECO:0000255" key="2">
    <source>
        <dbReference type="PROSITE-ProRule" id="PRU00498"/>
    </source>
</evidence>
<evidence type="ECO:0000269" key="3">
    <source>
    </source>
</evidence>
<evidence type="ECO:0000269" key="4">
    <source>
    </source>
</evidence>
<evidence type="ECO:0000269" key="5">
    <source>
    </source>
</evidence>
<evidence type="ECO:0000303" key="6">
    <source>
    </source>
</evidence>
<evidence type="ECO:0000303" key="7">
    <source>
    </source>
</evidence>
<evidence type="ECO:0000303" key="8">
    <source>
    </source>
</evidence>
<evidence type="ECO:0000305" key="9"/>
<evidence type="ECO:0000312" key="10">
    <source>
        <dbReference type="EMBL" id="AAD32198.1"/>
    </source>
</evidence>
<evidence type="ECO:0000312" key="11">
    <source>
        <dbReference type="EMBL" id="MBC1174042.1"/>
    </source>
</evidence>
<protein>
    <recommendedName>
        <fullName evidence="9">Yellow-related salivary protein LJM17</fullName>
    </recommendedName>
    <alternativeName>
        <fullName evidence="7 8">LJM17</fullName>
    </alternativeName>
    <alternativeName>
        <fullName evidence="6">LuloYELLOW</fullName>
    </alternativeName>
</protein>
<keyword id="KW-0325">Glycoprotein</keyword>
<keyword id="KW-0964">Secreted</keyword>
<keyword id="KW-0732">Signal</keyword>
<organism evidence="10">
    <name type="scientific">Lutzomyia longipalpis</name>
    <name type="common">Sand fly</name>
    <dbReference type="NCBI Taxonomy" id="7200"/>
    <lineage>
        <taxon>Eukaryota</taxon>
        <taxon>Metazoa</taxon>
        <taxon>Ecdysozoa</taxon>
        <taxon>Arthropoda</taxon>
        <taxon>Hexapoda</taxon>
        <taxon>Insecta</taxon>
        <taxon>Pterygota</taxon>
        <taxon>Neoptera</taxon>
        <taxon>Endopterygota</taxon>
        <taxon>Diptera</taxon>
        <taxon>Nematocera</taxon>
        <taxon>Psychodoidea</taxon>
        <taxon>Psychodidae</taxon>
        <taxon>Lutzomyia</taxon>
        <taxon>Lutzomyia</taxon>
    </lineage>
</organism>